<keyword id="KW-0414">Isoprene biosynthesis</keyword>
<keyword id="KW-0456">Lyase</keyword>
<keyword id="KW-0479">Metal-binding</keyword>
<keyword id="KW-1185">Reference proteome</keyword>
<protein>
    <recommendedName>
        <fullName evidence="1">2-C-methyl-D-erythritol 2,4-cyclodiphosphate synthase</fullName>
        <shortName evidence="1">MECDP-synthase</shortName>
        <shortName evidence="1">MECPP-synthase</shortName>
        <shortName evidence="1">MECPS</shortName>
        <ecNumber evidence="1">4.6.1.12</ecNumber>
    </recommendedName>
</protein>
<reference key="1">
    <citation type="submission" date="2006-12" db="EMBL/GenBank/DDBJ databases">
        <title>Complete sequence of chromosome 1 of Nocardioides sp. JS614.</title>
        <authorList>
            <person name="Copeland A."/>
            <person name="Lucas S."/>
            <person name="Lapidus A."/>
            <person name="Barry K."/>
            <person name="Detter J.C."/>
            <person name="Glavina del Rio T."/>
            <person name="Hammon N."/>
            <person name="Israni S."/>
            <person name="Dalin E."/>
            <person name="Tice H."/>
            <person name="Pitluck S."/>
            <person name="Thompson L.S."/>
            <person name="Brettin T."/>
            <person name="Bruce D."/>
            <person name="Han C."/>
            <person name="Tapia R."/>
            <person name="Schmutz J."/>
            <person name="Larimer F."/>
            <person name="Land M."/>
            <person name="Hauser L."/>
            <person name="Kyrpides N."/>
            <person name="Kim E."/>
            <person name="Mattes T."/>
            <person name="Gossett J."/>
            <person name="Richardson P."/>
        </authorList>
    </citation>
    <scope>NUCLEOTIDE SEQUENCE [LARGE SCALE GENOMIC DNA]</scope>
    <source>
        <strain>ATCC BAA-499 / JS614</strain>
    </source>
</reference>
<name>ISPF_NOCSJ</name>
<evidence type="ECO:0000255" key="1">
    <source>
        <dbReference type="HAMAP-Rule" id="MF_00107"/>
    </source>
</evidence>
<sequence>MDLLPRVGIGTDVHRLVDGVPLHLAGLHWPDEPQGLEGHSDADVAAHAACDALFSAAGLGDLGSNFGTADPAWAGASGAALLEETARRVRAAGFEIGNVAVQVIGNRPRLGGRRAEAETALSAAVGAPVSVSATTADGLGLTGRGEGVAAIATALVTPRHHGSA</sequence>
<proteinExistence type="inferred from homology"/>
<accession>A1SNY6</accession>
<comment type="function">
    <text evidence="1">Involved in the biosynthesis of isopentenyl diphosphate (IPP) and dimethylallyl diphosphate (DMAPP), two major building blocks of isoprenoid compounds. Catalyzes the conversion of 4-diphosphocytidyl-2-C-methyl-D-erythritol 2-phosphate (CDP-ME2P) to 2-C-methyl-D-erythritol 2,4-cyclodiphosphate (ME-CPP) with a corresponding release of cytidine 5-monophosphate (CMP).</text>
</comment>
<comment type="catalytic activity">
    <reaction evidence="1">
        <text>4-CDP-2-C-methyl-D-erythritol 2-phosphate = 2-C-methyl-D-erythritol 2,4-cyclic diphosphate + CMP</text>
        <dbReference type="Rhea" id="RHEA:23864"/>
        <dbReference type="ChEBI" id="CHEBI:57919"/>
        <dbReference type="ChEBI" id="CHEBI:58483"/>
        <dbReference type="ChEBI" id="CHEBI:60377"/>
        <dbReference type="EC" id="4.6.1.12"/>
    </reaction>
</comment>
<comment type="cofactor">
    <cofactor evidence="1">
        <name>a divalent metal cation</name>
        <dbReference type="ChEBI" id="CHEBI:60240"/>
    </cofactor>
    <text evidence="1">Binds 1 divalent metal cation per subunit.</text>
</comment>
<comment type="pathway">
    <text evidence="1">Isoprenoid biosynthesis; isopentenyl diphosphate biosynthesis via DXP pathway; isopentenyl diphosphate from 1-deoxy-D-xylulose 5-phosphate: step 4/6.</text>
</comment>
<comment type="subunit">
    <text evidence="1">Homotrimer.</text>
</comment>
<comment type="similarity">
    <text evidence="1">Belongs to the IspF family.</text>
</comment>
<gene>
    <name evidence="1" type="primary">ispF</name>
    <name type="ordered locus">Noca_4024</name>
</gene>
<feature type="chain" id="PRO_1000094275" description="2-C-methyl-D-erythritol 2,4-cyclodiphosphate synthase">
    <location>
        <begin position="1"/>
        <end position="164"/>
    </location>
</feature>
<feature type="binding site" evidence="1">
    <location>
        <begin position="12"/>
        <end position="14"/>
    </location>
    <ligand>
        <name>4-CDP-2-C-methyl-D-erythritol 2-phosphate</name>
        <dbReference type="ChEBI" id="CHEBI:57919"/>
    </ligand>
</feature>
<feature type="binding site" evidence="1">
    <location>
        <position position="12"/>
    </location>
    <ligand>
        <name>a divalent metal cation</name>
        <dbReference type="ChEBI" id="CHEBI:60240"/>
    </ligand>
</feature>
<feature type="binding site" evidence="1">
    <location>
        <position position="14"/>
    </location>
    <ligand>
        <name>a divalent metal cation</name>
        <dbReference type="ChEBI" id="CHEBI:60240"/>
    </ligand>
</feature>
<feature type="binding site" evidence="1">
    <location>
        <begin position="39"/>
        <end position="40"/>
    </location>
    <ligand>
        <name>4-CDP-2-C-methyl-D-erythritol 2-phosphate</name>
        <dbReference type="ChEBI" id="CHEBI:57919"/>
    </ligand>
</feature>
<feature type="binding site" evidence="1">
    <location>
        <position position="47"/>
    </location>
    <ligand>
        <name>a divalent metal cation</name>
        <dbReference type="ChEBI" id="CHEBI:60240"/>
    </ligand>
</feature>
<feature type="binding site" evidence="1">
    <location>
        <begin position="61"/>
        <end position="63"/>
    </location>
    <ligand>
        <name>4-CDP-2-C-methyl-D-erythritol 2-phosphate</name>
        <dbReference type="ChEBI" id="CHEBI:57919"/>
    </ligand>
</feature>
<feature type="binding site" evidence="1">
    <location>
        <begin position="134"/>
        <end position="137"/>
    </location>
    <ligand>
        <name>4-CDP-2-C-methyl-D-erythritol 2-phosphate</name>
        <dbReference type="ChEBI" id="CHEBI:57919"/>
    </ligand>
</feature>
<feature type="binding site" evidence="1">
    <location>
        <position position="144"/>
    </location>
    <ligand>
        <name>4-CDP-2-C-methyl-D-erythritol 2-phosphate</name>
        <dbReference type="ChEBI" id="CHEBI:57919"/>
    </ligand>
</feature>
<feature type="site" description="Transition state stabilizer" evidence="1">
    <location>
        <position position="39"/>
    </location>
</feature>
<feature type="site" description="Transition state stabilizer" evidence="1">
    <location>
        <position position="135"/>
    </location>
</feature>
<organism>
    <name type="scientific">Nocardioides sp. (strain ATCC BAA-499 / JS614)</name>
    <dbReference type="NCBI Taxonomy" id="196162"/>
    <lineage>
        <taxon>Bacteria</taxon>
        <taxon>Bacillati</taxon>
        <taxon>Actinomycetota</taxon>
        <taxon>Actinomycetes</taxon>
        <taxon>Propionibacteriales</taxon>
        <taxon>Nocardioidaceae</taxon>
        <taxon>Nocardioides</taxon>
    </lineage>
</organism>
<dbReference type="EC" id="4.6.1.12" evidence="1"/>
<dbReference type="EMBL" id="CP000509">
    <property type="protein sequence ID" value="ABL83521.1"/>
    <property type="molecule type" value="Genomic_DNA"/>
</dbReference>
<dbReference type="RefSeq" id="WP_011757450.1">
    <property type="nucleotide sequence ID" value="NC_008699.1"/>
</dbReference>
<dbReference type="SMR" id="A1SNY6"/>
<dbReference type="STRING" id="196162.Noca_4024"/>
<dbReference type="KEGG" id="nca:Noca_4024"/>
<dbReference type="eggNOG" id="COG0245">
    <property type="taxonomic scope" value="Bacteria"/>
</dbReference>
<dbReference type="HOGENOM" id="CLU_084630_1_0_11"/>
<dbReference type="OrthoDB" id="9804336at2"/>
<dbReference type="UniPathway" id="UPA00056">
    <property type="reaction ID" value="UER00095"/>
</dbReference>
<dbReference type="Proteomes" id="UP000000640">
    <property type="component" value="Chromosome"/>
</dbReference>
<dbReference type="GO" id="GO:0008685">
    <property type="term" value="F:2-C-methyl-D-erythritol 2,4-cyclodiphosphate synthase activity"/>
    <property type="evidence" value="ECO:0007669"/>
    <property type="project" value="UniProtKB-UniRule"/>
</dbReference>
<dbReference type="GO" id="GO:0046872">
    <property type="term" value="F:metal ion binding"/>
    <property type="evidence" value="ECO:0007669"/>
    <property type="project" value="UniProtKB-KW"/>
</dbReference>
<dbReference type="GO" id="GO:0019288">
    <property type="term" value="P:isopentenyl diphosphate biosynthetic process, methylerythritol 4-phosphate pathway"/>
    <property type="evidence" value="ECO:0007669"/>
    <property type="project" value="UniProtKB-UniRule"/>
</dbReference>
<dbReference type="GO" id="GO:0016114">
    <property type="term" value="P:terpenoid biosynthetic process"/>
    <property type="evidence" value="ECO:0007669"/>
    <property type="project" value="InterPro"/>
</dbReference>
<dbReference type="CDD" id="cd00554">
    <property type="entry name" value="MECDP_synthase"/>
    <property type="match status" value="1"/>
</dbReference>
<dbReference type="FunFam" id="3.30.1330.50:FF:000003">
    <property type="entry name" value="2-C-methyl-D-erythritol 2,4-cyclodiphosphate synthase"/>
    <property type="match status" value="1"/>
</dbReference>
<dbReference type="Gene3D" id="3.30.1330.50">
    <property type="entry name" value="2-C-methyl-D-erythritol 2,4-cyclodiphosphate synthase"/>
    <property type="match status" value="1"/>
</dbReference>
<dbReference type="HAMAP" id="MF_00107">
    <property type="entry name" value="IspF"/>
    <property type="match status" value="1"/>
</dbReference>
<dbReference type="InterPro" id="IPR003526">
    <property type="entry name" value="MECDP_synthase"/>
</dbReference>
<dbReference type="InterPro" id="IPR020555">
    <property type="entry name" value="MECDP_synthase_CS"/>
</dbReference>
<dbReference type="InterPro" id="IPR036571">
    <property type="entry name" value="MECDP_synthase_sf"/>
</dbReference>
<dbReference type="NCBIfam" id="TIGR00151">
    <property type="entry name" value="ispF"/>
    <property type="match status" value="1"/>
</dbReference>
<dbReference type="PANTHER" id="PTHR43181">
    <property type="entry name" value="2-C-METHYL-D-ERYTHRITOL 2,4-CYCLODIPHOSPHATE SYNTHASE, CHLOROPLASTIC"/>
    <property type="match status" value="1"/>
</dbReference>
<dbReference type="PANTHER" id="PTHR43181:SF1">
    <property type="entry name" value="2-C-METHYL-D-ERYTHRITOL 2,4-CYCLODIPHOSPHATE SYNTHASE, CHLOROPLASTIC"/>
    <property type="match status" value="1"/>
</dbReference>
<dbReference type="Pfam" id="PF02542">
    <property type="entry name" value="YgbB"/>
    <property type="match status" value="1"/>
</dbReference>
<dbReference type="SUPFAM" id="SSF69765">
    <property type="entry name" value="IpsF-like"/>
    <property type="match status" value="1"/>
</dbReference>
<dbReference type="PROSITE" id="PS01350">
    <property type="entry name" value="ISPF"/>
    <property type="match status" value="1"/>
</dbReference>